<name>ATPG_PROA2</name>
<comment type="function">
    <text evidence="1">Produces ATP from ADP in the presence of a proton gradient across the membrane. The gamma chain is believed to be important in regulating ATPase activity and the flow of protons through the CF(0) complex.</text>
</comment>
<comment type="subunit">
    <text evidence="1">F-type ATPases have 2 components, CF(1) - the catalytic core - and CF(0) - the membrane proton channel. CF(1) has five subunits: alpha(3), beta(3), gamma(1), delta(1), epsilon(1). CF(0) has three main subunits: a, b and c.</text>
</comment>
<comment type="subcellular location">
    <subcellularLocation>
        <location evidence="1">Cell membrane</location>
        <topology evidence="1">Peripheral membrane protein</topology>
    </subcellularLocation>
</comment>
<comment type="similarity">
    <text evidence="1">Belongs to the ATPase gamma chain family.</text>
</comment>
<keyword id="KW-0066">ATP synthesis</keyword>
<keyword id="KW-1003">Cell membrane</keyword>
<keyword id="KW-0139">CF(1)</keyword>
<keyword id="KW-0375">Hydrogen ion transport</keyword>
<keyword id="KW-0406">Ion transport</keyword>
<keyword id="KW-0472">Membrane</keyword>
<keyword id="KW-0813">Transport</keyword>
<protein>
    <recommendedName>
        <fullName evidence="1">ATP synthase gamma chain</fullName>
    </recommendedName>
    <alternativeName>
        <fullName evidence="1">ATP synthase F1 sector gamma subunit</fullName>
    </alternativeName>
    <alternativeName>
        <fullName evidence="1">F-ATPase gamma subunit</fullName>
    </alternativeName>
</protein>
<proteinExistence type="inferred from homology"/>
<dbReference type="EMBL" id="CP001108">
    <property type="protein sequence ID" value="ACF45320.1"/>
    <property type="molecule type" value="Genomic_DNA"/>
</dbReference>
<dbReference type="RefSeq" id="WP_012504857.1">
    <property type="nucleotide sequence ID" value="NC_011059.1"/>
</dbReference>
<dbReference type="SMR" id="B4S3X4"/>
<dbReference type="STRING" id="290512.Paes_0263"/>
<dbReference type="KEGG" id="paa:Paes_0263"/>
<dbReference type="eggNOG" id="COG0224">
    <property type="taxonomic scope" value="Bacteria"/>
</dbReference>
<dbReference type="HOGENOM" id="CLU_050669_0_1_10"/>
<dbReference type="Proteomes" id="UP000002725">
    <property type="component" value="Chromosome"/>
</dbReference>
<dbReference type="GO" id="GO:0005886">
    <property type="term" value="C:plasma membrane"/>
    <property type="evidence" value="ECO:0007669"/>
    <property type="project" value="UniProtKB-SubCell"/>
</dbReference>
<dbReference type="GO" id="GO:0045259">
    <property type="term" value="C:proton-transporting ATP synthase complex"/>
    <property type="evidence" value="ECO:0007669"/>
    <property type="project" value="UniProtKB-KW"/>
</dbReference>
<dbReference type="GO" id="GO:0005524">
    <property type="term" value="F:ATP binding"/>
    <property type="evidence" value="ECO:0007669"/>
    <property type="project" value="UniProtKB-UniRule"/>
</dbReference>
<dbReference type="GO" id="GO:0046933">
    <property type="term" value="F:proton-transporting ATP synthase activity, rotational mechanism"/>
    <property type="evidence" value="ECO:0007669"/>
    <property type="project" value="UniProtKB-UniRule"/>
</dbReference>
<dbReference type="GO" id="GO:0042777">
    <property type="term" value="P:proton motive force-driven plasma membrane ATP synthesis"/>
    <property type="evidence" value="ECO:0007669"/>
    <property type="project" value="UniProtKB-UniRule"/>
</dbReference>
<dbReference type="CDD" id="cd12151">
    <property type="entry name" value="F1-ATPase_gamma"/>
    <property type="match status" value="1"/>
</dbReference>
<dbReference type="FunFam" id="1.10.287.80:FF:000003">
    <property type="entry name" value="ATP synthase gamma chain, chloroplastic"/>
    <property type="match status" value="1"/>
</dbReference>
<dbReference type="Gene3D" id="3.40.1380.10">
    <property type="match status" value="1"/>
</dbReference>
<dbReference type="Gene3D" id="1.10.287.80">
    <property type="entry name" value="ATP synthase, gamma subunit, helix hairpin domain"/>
    <property type="match status" value="2"/>
</dbReference>
<dbReference type="HAMAP" id="MF_00815">
    <property type="entry name" value="ATP_synth_gamma_bact"/>
    <property type="match status" value="1"/>
</dbReference>
<dbReference type="InterPro" id="IPR035968">
    <property type="entry name" value="ATP_synth_F1_ATPase_gsu"/>
</dbReference>
<dbReference type="InterPro" id="IPR000131">
    <property type="entry name" value="ATP_synth_F1_gsu"/>
</dbReference>
<dbReference type="InterPro" id="IPR023632">
    <property type="entry name" value="ATP_synth_F1_gsu_CS"/>
</dbReference>
<dbReference type="NCBIfam" id="TIGR01146">
    <property type="entry name" value="ATPsyn_F1gamma"/>
    <property type="match status" value="1"/>
</dbReference>
<dbReference type="NCBIfam" id="NF009958">
    <property type="entry name" value="PRK13425.1"/>
    <property type="match status" value="1"/>
</dbReference>
<dbReference type="PANTHER" id="PTHR11693">
    <property type="entry name" value="ATP SYNTHASE GAMMA CHAIN"/>
    <property type="match status" value="1"/>
</dbReference>
<dbReference type="PANTHER" id="PTHR11693:SF22">
    <property type="entry name" value="ATP SYNTHASE SUBUNIT GAMMA, MITOCHONDRIAL"/>
    <property type="match status" value="1"/>
</dbReference>
<dbReference type="Pfam" id="PF00231">
    <property type="entry name" value="ATP-synt"/>
    <property type="match status" value="1"/>
</dbReference>
<dbReference type="PRINTS" id="PR00126">
    <property type="entry name" value="ATPASEGAMMA"/>
</dbReference>
<dbReference type="SUPFAM" id="SSF52943">
    <property type="entry name" value="ATP synthase (F1-ATPase), gamma subunit"/>
    <property type="match status" value="1"/>
</dbReference>
<dbReference type="PROSITE" id="PS00153">
    <property type="entry name" value="ATPASE_GAMMA"/>
    <property type="match status" value="1"/>
</dbReference>
<evidence type="ECO:0000255" key="1">
    <source>
        <dbReference type="HAMAP-Rule" id="MF_00815"/>
    </source>
</evidence>
<accession>B4S3X4</accession>
<organism>
    <name type="scientific">Prosthecochloris aestuarii (strain DSM 271 / SK 413)</name>
    <dbReference type="NCBI Taxonomy" id="290512"/>
    <lineage>
        <taxon>Bacteria</taxon>
        <taxon>Pseudomonadati</taxon>
        <taxon>Chlorobiota</taxon>
        <taxon>Chlorobiia</taxon>
        <taxon>Chlorobiales</taxon>
        <taxon>Chlorobiaceae</taxon>
        <taxon>Prosthecochloris</taxon>
    </lineage>
</organism>
<reference key="1">
    <citation type="submission" date="2008-06" db="EMBL/GenBank/DDBJ databases">
        <title>Complete sequence of chromosome of Prosthecochloris aestuarii DSM 271.</title>
        <authorList>
            <consortium name="US DOE Joint Genome Institute"/>
            <person name="Lucas S."/>
            <person name="Copeland A."/>
            <person name="Lapidus A."/>
            <person name="Glavina del Rio T."/>
            <person name="Dalin E."/>
            <person name="Tice H."/>
            <person name="Bruce D."/>
            <person name="Goodwin L."/>
            <person name="Pitluck S."/>
            <person name="Schmutz J."/>
            <person name="Larimer F."/>
            <person name="Land M."/>
            <person name="Hauser L."/>
            <person name="Kyrpides N."/>
            <person name="Anderson I."/>
            <person name="Liu Z."/>
            <person name="Li T."/>
            <person name="Zhao F."/>
            <person name="Overmann J."/>
            <person name="Bryant D.A."/>
            <person name="Richardson P."/>
        </authorList>
    </citation>
    <scope>NUCLEOTIDE SEQUENCE [LARGE SCALE GENOMIC DNA]</scope>
    <source>
        <strain>DSM 271 / SK 413</strain>
    </source>
</reference>
<feature type="chain" id="PRO_1000134188" description="ATP synthase gamma chain">
    <location>
        <begin position="1"/>
        <end position="292"/>
    </location>
</feature>
<gene>
    <name evidence="1" type="primary">atpG</name>
    <name type="ordered locus">Paes_0263</name>
</gene>
<sequence length="292" mass="31913">MATLKDIRTRIKGVKSTQQVTKAMKMVAAAKLRRAQESAVQARPYAAKLKEMLGSLSTKVDTSLNPMLSARDEVGRVLVVLITSDRGLCGAFNTNIIKVAQKVMTVDHADLHKSGKVDLICAGSKGYDFFRKRDYRILKGYPGVFQNLDFSVAKEIAEQASGMYLRGEVDKVVVVYNEFKSVLAPNLKSEVLLPITPEGSGDEGGSDYIYEPSPASIIDVLVPKHLNTQVWRMMLESNAAEQAARMAAMDSATENAKELLRLLNISYNRARQAAITTELSEIVAGAEALQGT</sequence>